<protein>
    <recommendedName>
        <fullName evidence="1">Alanine--tRNA ligase</fullName>
        <ecNumber evidence="1">6.1.1.7</ecNumber>
    </recommendedName>
    <alternativeName>
        <fullName evidence="1">Alanyl-tRNA synthetase</fullName>
        <shortName evidence="1">AlaRS</shortName>
    </alternativeName>
</protein>
<sequence>MITANEIRHRFLEFFRKNGHEVVDSSSLVPNDDPTLLFTNAGMVQFKKIFLGQEKRAYSRATTSQKCLRVGGKHNDLENVGRTARHHTFFEMLGNFSFGDYFKEDAIRFAWSFITEELKLPKEKLYITIYRDDDEAEKLWQSVAGVPSERIYRLGEKDNFWSMGDTGPCGPCSEIHIDQGADMACGPDCGIGKCDCDRFLEIWNLVFMQYDQAPDGTRTPLPNPCIDTGMGLERIAAVCQNVRSNFDCDLFQAFINYTAELAGVSYRKDSEDTDTALRVIADHSRAIAFMIADGILPSNEGRGYVLRRLIRRAYRFGRLIGLEGSYLYKTALKVVEEMGGAFPELLENKDFMARVVREEEERFNKTLDKGLLLLEDELSALTARNSTCVAGDVAFKLYDTFGFPLDIVNDIAEKRGFSVDEDGFKKLMQEQKSRAKAAWKGGGEQTLAARFQALLEEGIASEFVGYDHLSAESRIIALLGEDMESVEALPAGAAGYLVSTRTPFYGESGGQLGDTGDAVSETGSAEVTDTLKPSAKLLVHVVKVSQGELLRDQAVTLTVREGQRFASARNHTCTHILHAALRKVLGDHVKQAGSLVGPERLRFDFTHISAMTPEEILAVENEVNRVILSDIALNSEHMAYDDAVQKGAMALFGEKYESEVRVVSIPGESVELCGGTHLRATGQAGSFYITSESGVAAGVRRIEAVTGWDAVRLFMQQRAELHEVAGLVKGKPGDIAGRVKTLQKEVRTLKKDMEKLAAQAASGKGRNLMDSVEEVNGVKLLAASLPGANVKALREVMDDVRSKLTSGVACLVAVDGDKVHMLIAVSKDLHDRFTAPALIKDVAARIGGSGGGRPDMAQAGGTDPQGVEDAFACLRQIMGA</sequence>
<gene>
    <name evidence="1" type="primary">alaS</name>
    <name type="ordered locus">Dde_2374</name>
</gene>
<accession>Q30YS5</accession>
<keyword id="KW-0030">Aminoacyl-tRNA synthetase</keyword>
<keyword id="KW-0067">ATP-binding</keyword>
<keyword id="KW-0963">Cytoplasm</keyword>
<keyword id="KW-0436">Ligase</keyword>
<keyword id="KW-0479">Metal-binding</keyword>
<keyword id="KW-0547">Nucleotide-binding</keyword>
<keyword id="KW-0648">Protein biosynthesis</keyword>
<keyword id="KW-1185">Reference proteome</keyword>
<keyword id="KW-0694">RNA-binding</keyword>
<keyword id="KW-0820">tRNA-binding</keyword>
<keyword id="KW-0862">Zinc</keyword>
<evidence type="ECO:0000255" key="1">
    <source>
        <dbReference type="HAMAP-Rule" id="MF_00036"/>
    </source>
</evidence>
<name>SYA_OLEA2</name>
<reference key="1">
    <citation type="journal article" date="2011" name="J. Bacteriol.">
        <title>Complete genome sequence and updated annotation of Desulfovibrio alaskensis G20.</title>
        <authorList>
            <person name="Hauser L.J."/>
            <person name="Land M.L."/>
            <person name="Brown S.D."/>
            <person name="Larimer F."/>
            <person name="Keller K.L."/>
            <person name="Rapp-Giles B.J."/>
            <person name="Price M.N."/>
            <person name="Lin M."/>
            <person name="Bruce D.C."/>
            <person name="Detter J.C."/>
            <person name="Tapia R."/>
            <person name="Han C.S."/>
            <person name="Goodwin L.A."/>
            <person name="Cheng J.F."/>
            <person name="Pitluck S."/>
            <person name="Copeland A."/>
            <person name="Lucas S."/>
            <person name="Nolan M."/>
            <person name="Lapidus A.L."/>
            <person name="Palumbo A.V."/>
            <person name="Wall J.D."/>
        </authorList>
    </citation>
    <scope>NUCLEOTIDE SEQUENCE [LARGE SCALE GENOMIC DNA]</scope>
    <source>
        <strain>ATCC BAA-1058 / DSM 17464 / G20</strain>
    </source>
</reference>
<feature type="chain" id="PRO_0000347587" description="Alanine--tRNA ligase">
    <location>
        <begin position="1"/>
        <end position="880"/>
    </location>
</feature>
<feature type="binding site" evidence="1">
    <location>
        <position position="571"/>
    </location>
    <ligand>
        <name>Zn(2+)</name>
        <dbReference type="ChEBI" id="CHEBI:29105"/>
    </ligand>
</feature>
<feature type="binding site" evidence="1">
    <location>
        <position position="575"/>
    </location>
    <ligand>
        <name>Zn(2+)</name>
        <dbReference type="ChEBI" id="CHEBI:29105"/>
    </ligand>
</feature>
<feature type="binding site" evidence="1">
    <location>
        <position position="673"/>
    </location>
    <ligand>
        <name>Zn(2+)</name>
        <dbReference type="ChEBI" id="CHEBI:29105"/>
    </ligand>
</feature>
<feature type="binding site" evidence="1">
    <location>
        <position position="677"/>
    </location>
    <ligand>
        <name>Zn(2+)</name>
        <dbReference type="ChEBI" id="CHEBI:29105"/>
    </ligand>
</feature>
<dbReference type="EC" id="6.1.1.7" evidence="1"/>
<dbReference type="EMBL" id="CP000112">
    <property type="protein sequence ID" value="ABB39171.1"/>
    <property type="molecule type" value="Genomic_DNA"/>
</dbReference>
<dbReference type="RefSeq" id="WP_011368247.1">
    <property type="nucleotide sequence ID" value="NC_007519.1"/>
</dbReference>
<dbReference type="SMR" id="Q30YS5"/>
<dbReference type="STRING" id="207559.Dde_2374"/>
<dbReference type="KEGG" id="dde:Dde_2374"/>
<dbReference type="eggNOG" id="COG0013">
    <property type="taxonomic scope" value="Bacteria"/>
</dbReference>
<dbReference type="HOGENOM" id="CLU_004485_1_1_7"/>
<dbReference type="Proteomes" id="UP000002710">
    <property type="component" value="Chromosome"/>
</dbReference>
<dbReference type="GO" id="GO:0005829">
    <property type="term" value="C:cytosol"/>
    <property type="evidence" value="ECO:0007669"/>
    <property type="project" value="TreeGrafter"/>
</dbReference>
<dbReference type="GO" id="GO:0004813">
    <property type="term" value="F:alanine-tRNA ligase activity"/>
    <property type="evidence" value="ECO:0007669"/>
    <property type="project" value="UniProtKB-UniRule"/>
</dbReference>
<dbReference type="GO" id="GO:0002161">
    <property type="term" value="F:aminoacyl-tRNA deacylase activity"/>
    <property type="evidence" value="ECO:0007669"/>
    <property type="project" value="TreeGrafter"/>
</dbReference>
<dbReference type="GO" id="GO:0005524">
    <property type="term" value="F:ATP binding"/>
    <property type="evidence" value="ECO:0007669"/>
    <property type="project" value="UniProtKB-UniRule"/>
</dbReference>
<dbReference type="GO" id="GO:0000049">
    <property type="term" value="F:tRNA binding"/>
    <property type="evidence" value="ECO:0007669"/>
    <property type="project" value="UniProtKB-KW"/>
</dbReference>
<dbReference type="GO" id="GO:0008270">
    <property type="term" value="F:zinc ion binding"/>
    <property type="evidence" value="ECO:0007669"/>
    <property type="project" value="UniProtKB-UniRule"/>
</dbReference>
<dbReference type="GO" id="GO:0006419">
    <property type="term" value="P:alanyl-tRNA aminoacylation"/>
    <property type="evidence" value="ECO:0007669"/>
    <property type="project" value="UniProtKB-UniRule"/>
</dbReference>
<dbReference type="GO" id="GO:0045892">
    <property type="term" value="P:negative regulation of DNA-templated transcription"/>
    <property type="evidence" value="ECO:0007669"/>
    <property type="project" value="TreeGrafter"/>
</dbReference>
<dbReference type="CDD" id="cd00673">
    <property type="entry name" value="AlaRS_core"/>
    <property type="match status" value="1"/>
</dbReference>
<dbReference type="FunFam" id="3.10.310.40:FF:000001">
    <property type="entry name" value="Alanine--tRNA ligase"/>
    <property type="match status" value="1"/>
</dbReference>
<dbReference type="FunFam" id="3.30.54.20:FF:000001">
    <property type="entry name" value="Alanine--tRNA ligase"/>
    <property type="match status" value="1"/>
</dbReference>
<dbReference type="FunFam" id="3.30.930.10:FF:000004">
    <property type="entry name" value="Alanine--tRNA ligase"/>
    <property type="match status" value="1"/>
</dbReference>
<dbReference type="FunFam" id="3.30.980.10:FF:000004">
    <property type="entry name" value="Alanine--tRNA ligase, cytoplasmic"/>
    <property type="match status" value="1"/>
</dbReference>
<dbReference type="Gene3D" id="2.40.30.130">
    <property type="match status" value="1"/>
</dbReference>
<dbReference type="Gene3D" id="3.10.310.40">
    <property type="match status" value="1"/>
</dbReference>
<dbReference type="Gene3D" id="3.30.54.20">
    <property type="match status" value="1"/>
</dbReference>
<dbReference type="Gene3D" id="6.10.250.550">
    <property type="match status" value="1"/>
</dbReference>
<dbReference type="Gene3D" id="3.30.930.10">
    <property type="entry name" value="Bira Bifunctional Protein, Domain 2"/>
    <property type="match status" value="1"/>
</dbReference>
<dbReference type="Gene3D" id="3.30.980.10">
    <property type="entry name" value="Threonyl-trna Synthetase, Chain A, domain 2"/>
    <property type="match status" value="1"/>
</dbReference>
<dbReference type="HAMAP" id="MF_00036_B">
    <property type="entry name" value="Ala_tRNA_synth_B"/>
    <property type="match status" value="1"/>
</dbReference>
<dbReference type="InterPro" id="IPR045864">
    <property type="entry name" value="aa-tRNA-synth_II/BPL/LPL"/>
</dbReference>
<dbReference type="InterPro" id="IPR002318">
    <property type="entry name" value="Ala-tRNA-lgiase_IIc"/>
</dbReference>
<dbReference type="InterPro" id="IPR018162">
    <property type="entry name" value="Ala-tRNA-ligase_IIc_anticod-bd"/>
</dbReference>
<dbReference type="InterPro" id="IPR018165">
    <property type="entry name" value="Ala-tRNA-synth_IIc_core"/>
</dbReference>
<dbReference type="InterPro" id="IPR018164">
    <property type="entry name" value="Ala-tRNA-synth_IIc_N"/>
</dbReference>
<dbReference type="InterPro" id="IPR050058">
    <property type="entry name" value="Ala-tRNA_ligase"/>
</dbReference>
<dbReference type="InterPro" id="IPR023033">
    <property type="entry name" value="Ala_tRNA_ligase_euk/bac"/>
</dbReference>
<dbReference type="InterPro" id="IPR003156">
    <property type="entry name" value="DHHA1_dom"/>
</dbReference>
<dbReference type="InterPro" id="IPR018163">
    <property type="entry name" value="Thr/Ala-tRNA-synth_IIc_edit"/>
</dbReference>
<dbReference type="InterPro" id="IPR009000">
    <property type="entry name" value="Transl_B-barrel_sf"/>
</dbReference>
<dbReference type="InterPro" id="IPR012947">
    <property type="entry name" value="tRNA_SAD"/>
</dbReference>
<dbReference type="NCBIfam" id="TIGR00344">
    <property type="entry name" value="alaS"/>
    <property type="match status" value="1"/>
</dbReference>
<dbReference type="PANTHER" id="PTHR11777:SF9">
    <property type="entry name" value="ALANINE--TRNA LIGASE, CYTOPLASMIC"/>
    <property type="match status" value="1"/>
</dbReference>
<dbReference type="PANTHER" id="PTHR11777">
    <property type="entry name" value="ALANYL-TRNA SYNTHETASE"/>
    <property type="match status" value="1"/>
</dbReference>
<dbReference type="Pfam" id="PF02272">
    <property type="entry name" value="DHHA1"/>
    <property type="match status" value="1"/>
</dbReference>
<dbReference type="Pfam" id="PF01411">
    <property type="entry name" value="tRNA-synt_2c"/>
    <property type="match status" value="1"/>
</dbReference>
<dbReference type="Pfam" id="PF07973">
    <property type="entry name" value="tRNA_SAD"/>
    <property type="match status" value="1"/>
</dbReference>
<dbReference type="PRINTS" id="PR00980">
    <property type="entry name" value="TRNASYNTHALA"/>
</dbReference>
<dbReference type="SMART" id="SM00863">
    <property type="entry name" value="tRNA_SAD"/>
    <property type="match status" value="1"/>
</dbReference>
<dbReference type="SUPFAM" id="SSF55681">
    <property type="entry name" value="Class II aaRS and biotin synthetases"/>
    <property type="match status" value="1"/>
</dbReference>
<dbReference type="SUPFAM" id="SSF101353">
    <property type="entry name" value="Putative anticodon-binding domain of alanyl-tRNA synthetase (AlaRS)"/>
    <property type="match status" value="1"/>
</dbReference>
<dbReference type="SUPFAM" id="SSF55186">
    <property type="entry name" value="ThrRS/AlaRS common domain"/>
    <property type="match status" value="1"/>
</dbReference>
<dbReference type="SUPFAM" id="SSF50447">
    <property type="entry name" value="Translation proteins"/>
    <property type="match status" value="1"/>
</dbReference>
<dbReference type="PROSITE" id="PS50860">
    <property type="entry name" value="AA_TRNA_LIGASE_II_ALA"/>
    <property type="match status" value="1"/>
</dbReference>
<comment type="function">
    <text evidence="1">Catalyzes the attachment of alanine to tRNA(Ala) in a two-step reaction: alanine is first activated by ATP to form Ala-AMP and then transferred to the acceptor end of tRNA(Ala). Also edits incorrectly charged Ser-tRNA(Ala) and Gly-tRNA(Ala) via its editing domain.</text>
</comment>
<comment type="catalytic activity">
    <reaction evidence="1">
        <text>tRNA(Ala) + L-alanine + ATP = L-alanyl-tRNA(Ala) + AMP + diphosphate</text>
        <dbReference type="Rhea" id="RHEA:12540"/>
        <dbReference type="Rhea" id="RHEA-COMP:9657"/>
        <dbReference type="Rhea" id="RHEA-COMP:9923"/>
        <dbReference type="ChEBI" id="CHEBI:30616"/>
        <dbReference type="ChEBI" id="CHEBI:33019"/>
        <dbReference type="ChEBI" id="CHEBI:57972"/>
        <dbReference type="ChEBI" id="CHEBI:78442"/>
        <dbReference type="ChEBI" id="CHEBI:78497"/>
        <dbReference type="ChEBI" id="CHEBI:456215"/>
        <dbReference type="EC" id="6.1.1.7"/>
    </reaction>
</comment>
<comment type="cofactor">
    <cofactor evidence="1">
        <name>Zn(2+)</name>
        <dbReference type="ChEBI" id="CHEBI:29105"/>
    </cofactor>
    <text evidence="1">Binds 1 zinc ion per subunit.</text>
</comment>
<comment type="subcellular location">
    <subcellularLocation>
        <location evidence="1">Cytoplasm</location>
    </subcellularLocation>
</comment>
<comment type="domain">
    <text evidence="1">Consists of three domains; the N-terminal catalytic domain, the editing domain and the C-terminal C-Ala domain. The editing domain removes incorrectly charged amino acids, while the C-Ala domain, along with tRNA(Ala), serves as a bridge to cooperatively bring together the editing and aminoacylation centers thus stimulating deacylation of misacylated tRNAs.</text>
</comment>
<comment type="similarity">
    <text evidence="1">Belongs to the class-II aminoacyl-tRNA synthetase family.</text>
</comment>
<organism>
    <name type="scientific">Oleidesulfovibrio alaskensis (strain ATCC BAA-1058 / DSM 17464 / G20)</name>
    <name type="common">Desulfovibrio alaskensis</name>
    <dbReference type="NCBI Taxonomy" id="207559"/>
    <lineage>
        <taxon>Bacteria</taxon>
        <taxon>Pseudomonadati</taxon>
        <taxon>Thermodesulfobacteriota</taxon>
        <taxon>Desulfovibrionia</taxon>
        <taxon>Desulfovibrionales</taxon>
        <taxon>Desulfovibrionaceae</taxon>
        <taxon>Oleidesulfovibrio</taxon>
    </lineage>
</organism>
<proteinExistence type="inferred from homology"/>